<gene>
    <name evidence="3" type="primary">xenC</name>
</gene>
<comment type="function">
    <text evidence="2">Cyclic ether formation enzyme; part of the gene cluster that mediates the biosynthesis of xenoacremones such as xenoacremone A, a compound that shows inhibitory activity toward the PI3K/AKT signaling pathway and which has the ability to induce apoptosis of A549 lung cancer cells (PubMed:34900544). Within the pathway, cooperation of the hybrid PKS-NRPS xenE and the trans-acting enoyl reductase xenG is responsible for the formation of the reduced tyrosine-nonaketide derivative (PubMed:34900544). The alpha/beta hydrolase xenA then accelerates intramolecular nucleophilic attack to give a pyrrolidone derivative (PubMed:34900544). Subsequently, three enzymes, xenF, xenD, and xenC, coordinately participate in the conversion to xenoacremone B (PubMed:34900544). XenF catalyzes sigmatropic rearrangement to form an A-ring, which leads to an unusual intermediate with a hexane ring, which is required for the formation of the tricarbocyclic product (PubMed:34900544). Epoxidation catalyzed by xenD and the formation of the paracyclophane ether catalyzed by xenC initiate a spontaneous intramolecular Diels-Alder (IMDA) reaction to yield xenoacremone B (PubMed:34900544). Spontaneous hydration of xenoacremone B leads to the formation of xenoacremone A, which undergoes subsequent methylation to afford xenoacremone C (PubMed:34900544).</text>
</comment>
<comment type="pathway">
    <text evidence="2">Mycotoxin biosynthesis.</text>
</comment>
<comment type="subcellular location">
    <subcellularLocation>
        <location evidence="1">Membrane</location>
        <topology evidence="1">Multi-pass membrane protein</topology>
    </subcellularLocation>
</comment>
<comment type="disruption phenotype">
    <text evidence="2">Abolishes the production of xenoacremones A and B.</text>
</comment>
<comment type="similarity">
    <text evidence="4">Belongs to the cyclic ether formation enzyme xenC family.</text>
</comment>
<dbReference type="EC" id="5.-.-.-" evidence="2"/>
<dbReference type="EMBL" id="MT876600">
    <property type="protein sequence ID" value="QOJ72661.1"/>
    <property type="molecule type" value="Genomic_DNA"/>
</dbReference>
<dbReference type="GO" id="GO:0016020">
    <property type="term" value="C:membrane"/>
    <property type="evidence" value="ECO:0007669"/>
    <property type="project" value="UniProtKB-SubCell"/>
</dbReference>
<dbReference type="GO" id="GO:0016853">
    <property type="term" value="F:isomerase activity"/>
    <property type="evidence" value="ECO:0007669"/>
    <property type="project" value="UniProtKB-KW"/>
</dbReference>
<reference key="1">
    <citation type="journal article" date="2021" name="Acta Pharm. Sin. B (APSB)">
        <title>Tricarbocyclic core formation of tyrosine-decahydrofluorenes implies a three-enzyme cascade with XenF-mediated sigmatropic rearrangement as a prerequisite.</title>
        <authorList>
            <person name="Liu Z."/>
            <person name="Li W."/>
            <person name="Zhang P."/>
            <person name="Fan J."/>
            <person name="Zhang F."/>
            <person name="Wang C."/>
            <person name="Li S."/>
            <person name="Sun Y."/>
            <person name="Chen S."/>
            <person name="Yin W."/>
        </authorList>
    </citation>
    <scope>NUCLEOTIDE SEQUENCE [GENOMIC DNA]</scope>
    <scope>FUNCTION</scope>
    <scope>DISRUPTION PHENOTYPE</scope>
    <scope>CATALYTIC ACTIVITY</scope>
    <scope>PATHWAY</scope>
    <source>
        <strain>ML-31</strain>
    </source>
</reference>
<name>XENC_XENSI</name>
<evidence type="ECO:0000255" key="1"/>
<evidence type="ECO:0000269" key="2">
    <source>
    </source>
</evidence>
<evidence type="ECO:0000303" key="3">
    <source>
    </source>
</evidence>
<evidence type="ECO:0000305" key="4"/>
<feature type="signal peptide" evidence="1">
    <location>
        <begin position="1"/>
        <end position="24"/>
    </location>
</feature>
<feature type="chain" id="PRO_0000456861" description="Cyclic ether formation enzyme xenC" evidence="1">
    <location>
        <begin position="25"/>
        <end position="123"/>
    </location>
</feature>
<feature type="transmembrane region" description="Helical" evidence="1">
    <location>
        <begin position="58"/>
        <end position="78"/>
    </location>
</feature>
<feature type="transmembrane region" description="Helical" evidence="1">
    <location>
        <begin position="102"/>
        <end position="122"/>
    </location>
</feature>
<accession>A0A7L9EZ67</accession>
<sequence length="123" mass="13535">MSSLLLSDVLSYGIFGFSALCVQAHLTSKFTPSFSRNLEEKLPLHNKAVFWWLGISDSALRYVFVSINIAVCVLLWSPELRSFGLKFTLGLLGVGFYSDMKLGESPIPHLLLVSTVGAAILVR</sequence>
<keyword id="KW-0413">Isomerase</keyword>
<keyword id="KW-0472">Membrane</keyword>
<keyword id="KW-0732">Signal</keyword>
<keyword id="KW-0812">Transmembrane</keyword>
<keyword id="KW-1133">Transmembrane helix</keyword>
<proteinExistence type="evidence at protein level"/>
<protein>
    <recommendedName>
        <fullName evidence="3">Cyclic ether formation enzyme xenC</fullName>
        <ecNumber evidence="2">5.-.-.-</ecNumber>
    </recommendedName>
    <alternativeName>
        <fullName evidence="3">Xenoacremones biosynthesis cluster protein C</fullName>
    </alternativeName>
</protein>
<organism>
    <name type="scientific">Xenoacremonium sinensis</name>
    <name type="common">Endophyte fungus</name>
    <dbReference type="NCBI Taxonomy" id="2480843"/>
    <lineage>
        <taxon>Eukaryota</taxon>
        <taxon>Fungi</taxon>
        <taxon>Dikarya</taxon>
        <taxon>Ascomycota</taxon>
        <taxon>Pezizomycotina</taxon>
        <taxon>Sordariomycetes</taxon>
        <taxon>Hypocreomycetidae</taxon>
        <taxon>Hypocreales</taxon>
        <taxon>Nectriaceae</taxon>
        <taxon>Xenoacremonium</taxon>
    </lineage>
</organism>